<sequence>MSLPSCVPGYRRILLKLSGEVLMGEQQFGIDTDYVARVAQEVKDARDSGLEICLVIGGGNIFRGMAGAAKGMDRAQADYMGMLATVMNALAMQSALEQLGVPTRVQSAIEMDKVCEPVIRRRAERHLEKGRIVIFAAGVGAPYFTTDSGAALRAAEMKCDALLKGTSVDGVYNADPKKDPAAKRYETVDYDTVLADNLKVMDASAVALCRDNNIPIVVFSIRERGNLARVLAGEGTQTTVKKEA</sequence>
<protein>
    <recommendedName>
        <fullName evidence="1">Uridylate kinase</fullName>
        <shortName evidence="1">UK</shortName>
        <ecNumber evidence="1">2.7.4.22</ecNumber>
    </recommendedName>
    <alternativeName>
        <fullName evidence="1">Uridine monophosphate kinase</fullName>
        <shortName evidence="1">UMP kinase</shortName>
        <shortName evidence="1">UMPK</shortName>
    </alternativeName>
</protein>
<proteinExistence type="inferred from homology"/>
<feature type="chain" id="PRO_1000053968" description="Uridylate kinase">
    <location>
        <begin position="1"/>
        <end position="244"/>
    </location>
</feature>
<feature type="binding site" evidence="1">
    <location>
        <begin position="16"/>
        <end position="19"/>
    </location>
    <ligand>
        <name>ATP</name>
        <dbReference type="ChEBI" id="CHEBI:30616"/>
    </ligand>
</feature>
<feature type="binding site" evidence="1">
    <location>
        <position position="58"/>
    </location>
    <ligand>
        <name>UMP</name>
        <dbReference type="ChEBI" id="CHEBI:57865"/>
    </ligand>
</feature>
<feature type="binding site" evidence="1">
    <location>
        <position position="59"/>
    </location>
    <ligand>
        <name>ATP</name>
        <dbReference type="ChEBI" id="CHEBI:30616"/>
    </ligand>
</feature>
<feature type="binding site" evidence="1">
    <location>
        <position position="63"/>
    </location>
    <ligand>
        <name>ATP</name>
        <dbReference type="ChEBI" id="CHEBI:30616"/>
    </ligand>
</feature>
<feature type="binding site" evidence="1">
    <location>
        <position position="78"/>
    </location>
    <ligand>
        <name>UMP</name>
        <dbReference type="ChEBI" id="CHEBI:57865"/>
    </ligand>
</feature>
<feature type="binding site" evidence="1">
    <location>
        <begin position="139"/>
        <end position="146"/>
    </location>
    <ligand>
        <name>UMP</name>
        <dbReference type="ChEBI" id="CHEBI:57865"/>
    </ligand>
</feature>
<feature type="binding site" evidence="1">
    <location>
        <position position="166"/>
    </location>
    <ligand>
        <name>ATP</name>
        <dbReference type="ChEBI" id="CHEBI:30616"/>
    </ligand>
</feature>
<feature type="binding site" evidence="1">
    <location>
        <position position="172"/>
    </location>
    <ligand>
        <name>ATP</name>
        <dbReference type="ChEBI" id="CHEBI:30616"/>
    </ligand>
</feature>
<feature type="binding site" evidence="1">
    <location>
        <position position="175"/>
    </location>
    <ligand>
        <name>ATP</name>
        <dbReference type="ChEBI" id="CHEBI:30616"/>
    </ligand>
</feature>
<evidence type="ECO:0000255" key="1">
    <source>
        <dbReference type="HAMAP-Rule" id="MF_01220"/>
    </source>
</evidence>
<comment type="function">
    <text evidence="1">Catalyzes the reversible phosphorylation of UMP to UDP.</text>
</comment>
<comment type="catalytic activity">
    <reaction evidence="1">
        <text>UMP + ATP = UDP + ADP</text>
        <dbReference type="Rhea" id="RHEA:24400"/>
        <dbReference type="ChEBI" id="CHEBI:30616"/>
        <dbReference type="ChEBI" id="CHEBI:57865"/>
        <dbReference type="ChEBI" id="CHEBI:58223"/>
        <dbReference type="ChEBI" id="CHEBI:456216"/>
        <dbReference type="EC" id="2.7.4.22"/>
    </reaction>
</comment>
<comment type="activity regulation">
    <text evidence="1">Inhibited by UTP.</text>
</comment>
<comment type="pathway">
    <text evidence="1">Pyrimidine metabolism; CTP biosynthesis via de novo pathway; UDP from UMP (UMPK route): step 1/1.</text>
</comment>
<comment type="subunit">
    <text evidence="1">Homohexamer.</text>
</comment>
<comment type="subcellular location">
    <subcellularLocation>
        <location evidence="1">Cytoplasm</location>
    </subcellularLocation>
</comment>
<comment type="similarity">
    <text evidence="1">Belongs to the UMP kinase family.</text>
</comment>
<keyword id="KW-0067">ATP-binding</keyword>
<keyword id="KW-0963">Cytoplasm</keyword>
<keyword id="KW-0418">Kinase</keyword>
<keyword id="KW-0547">Nucleotide-binding</keyword>
<keyword id="KW-0665">Pyrimidine biosynthesis</keyword>
<keyword id="KW-1185">Reference proteome</keyword>
<keyword id="KW-0808">Transferase</keyword>
<dbReference type="EC" id="2.7.4.22" evidence="1"/>
<dbReference type="EMBL" id="CP000248">
    <property type="protein sequence ID" value="ABD25815.1"/>
    <property type="molecule type" value="Genomic_DNA"/>
</dbReference>
<dbReference type="RefSeq" id="WP_011445029.1">
    <property type="nucleotide sequence ID" value="NC_007794.1"/>
</dbReference>
<dbReference type="SMR" id="Q2G8K8"/>
<dbReference type="STRING" id="279238.Saro_1371"/>
<dbReference type="KEGG" id="nar:Saro_1371"/>
<dbReference type="eggNOG" id="COG0528">
    <property type="taxonomic scope" value="Bacteria"/>
</dbReference>
<dbReference type="HOGENOM" id="CLU_033861_0_0_5"/>
<dbReference type="UniPathway" id="UPA00159">
    <property type="reaction ID" value="UER00275"/>
</dbReference>
<dbReference type="Proteomes" id="UP000009134">
    <property type="component" value="Chromosome"/>
</dbReference>
<dbReference type="GO" id="GO:0005737">
    <property type="term" value="C:cytoplasm"/>
    <property type="evidence" value="ECO:0007669"/>
    <property type="project" value="UniProtKB-SubCell"/>
</dbReference>
<dbReference type="GO" id="GO:0005524">
    <property type="term" value="F:ATP binding"/>
    <property type="evidence" value="ECO:0007669"/>
    <property type="project" value="UniProtKB-KW"/>
</dbReference>
<dbReference type="GO" id="GO:0033862">
    <property type="term" value="F:UMP kinase activity"/>
    <property type="evidence" value="ECO:0007669"/>
    <property type="project" value="UniProtKB-EC"/>
</dbReference>
<dbReference type="GO" id="GO:0044210">
    <property type="term" value="P:'de novo' CTP biosynthetic process"/>
    <property type="evidence" value="ECO:0007669"/>
    <property type="project" value="UniProtKB-UniRule"/>
</dbReference>
<dbReference type="GO" id="GO:0006225">
    <property type="term" value="P:UDP biosynthetic process"/>
    <property type="evidence" value="ECO:0007669"/>
    <property type="project" value="TreeGrafter"/>
</dbReference>
<dbReference type="CDD" id="cd04254">
    <property type="entry name" value="AAK_UMPK-PyrH-Ec"/>
    <property type="match status" value="1"/>
</dbReference>
<dbReference type="FunFam" id="3.40.1160.10:FF:000001">
    <property type="entry name" value="Uridylate kinase"/>
    <property type="match status" value="1"/>
</dbReference>
<dbReference type="Gene3D" id="3.40.1160.10">
    <property type="entry name" value="Acetylglutamate kinase-like"/>
    <property type="match status" value="1"/>
</dbReference>
<dbReference type="HAMAP" id="MF_01220_B">
    <property type="entry name" value="PyrH_B"/>
    <property type="match status" value="1"/>
</dbReference>
<dbReference type="InterPro" id="IPR036393">
    <property type="entry name" value="AceGlu_kinase-like_sf"/>
</dbReference>
<dbReference type="InterPro" id="IPR001048">
    <property type="entry name" value="Asp/Glu/Uridylate_kinase"/>
</dbReference>
<dbReference type="InterPro" id="IPR011817">
    <property type="entry name" value="Uridylate_kinase"/>
</dbReference>
<dbReference type="InterPro" id="IPR015963">
    <property type="entry name" value="Uridylate_kinase_bac"/>
</dbReference>
<dbReference type="NCBIfam" id="TIGR02075">
    <property type="entry name" value="pyrH_bact"/>
    <property type="match status" value="1"/>
</dbReference>
<dbReference type="PANTHER" id="PTHR42833">
    <property type="entry name" value="URIDYLATE KINASE"/>
    <property type="match status" value="1"/>
</dbReference>
<dbReference type="PANTHER" id="PTHR42833:SF4">
    <property type="entry name" value="URIDYLATE KINASE PUMPKIN, CHLOROPLASTIC"/>
    <property type="match status" value="1"/>
</dbReference>
<dbReference type="Pfam" id="PF00696">
    <property type="entry name" value="AA_kinase"/>
    <property type="match status" value="1"/>
</dbReference>
<dbReference type="PIRSF" id="PIRSF005650">
    <property type="entry name" value="Uridylate_kin"/>
    <property type="match status" value="1"/>
</dbReference>
<dbReference type="SUPFAM" id="SSF53633">
    <property type="entry name" value="Carbamate kinase-like"/>
    <property type="match status" value="1"/>
</dbReference>
<reference key="1">
    <citation type="submission" date="2006-01" db="EMBL/GenBank/DDBJ databases">
        <title>Complete sequence of Novosphingobium aromaticivorans DSM 12444.</title>
        <authorList>
            <consortium name="US DOE Joint Genome Institute"/>
            <person name="Copeland A."/>
            <person name="Lucas S."/>
            <person name="Lapidus A."/>
            <person name="Barry K."/>
            <person name="Detter J.C."/>
            <person name="Glavina T."/>
            <person name="Hammon N."/>
            <person name="Israni S."/>
            <person name="Pitluck S."/>
            <person name="Chain P."/>
            <person name="Malfatti S."/>
            <person name="Shin M."/>
            <person name="Vergez L."/>
            <person name="Schmutz J."/>
            <person name="Larimer F."/>
            <person name="Land M."/>
            <person name="Kyrpides N."/>
            <person name="Ivanova N."/>
            <person name="Fredrickson J."/>
            <person name="Balkwill D."/>
            <person name="Romine M.F."/>
            <person name="Richardson P."/>
        </authorList>
    </citation>
    <scope>NUCLEOTIDE SEQUENCE [LARGE SCALE GENOMIC DNA]</scope>
    <source>
        <strain>ATCC 700278 / DSM 12444 / CCUG 56034 / CIP 105152 / NBRC 16084 / F199</strain>
    </source>
</reference>
<accession>Q2G8K8</accession>
<organism>
    <name type="scientific">Novosphingobium aromaticivorans (strain ATCC 700278 / DSM 12444 / CCUG 56034 / CIP 105152 / NBRC 16084 / F199)</name>
    <dbReference type="NCBI Taxonomy" id="279238"/>
    <lineage>
        <taxon>Bacteria</taxon>
        <taxon>Pseudomonadati</taxon>
        <taxon>Pseudomonadota</taxon>
        <taxon>Alphaproteobacteria</taxon>
        <taxon>Sphingomonadales</taxon>
        <taxon>Sphingomonadaceae</taxon>
        <taxon>Novosphingobium</taxon>
    </lineage>
</organism>
<gene>
    <name evidence="1" type="primary">pyrH</name>
    <name type="ordered locus">Saro_1371</name>
</gene>
<name>PYRH_NOVAD</name>